<sequence length="419" mass="46398">MFKFNDEKGQLKCSFCGKTQDQVRKLVAGPGVYICDECIELCNEIIEEELGISEFVDFGEVPKPQEIRHILSDYVIGQERAKKALAVAVYNHYKRINSNETKEDEVELSKSNICLIGPTGSGKTLLAQTLARILNVPFAIADATSLTEAGYVGEDVENILLKLIQSADYDVEKAEKGIIYIDEIDKVARKSENPSITRDVSGEGVQQALLKILEGTVASVPPQGGRKHPHQELIQIDTGNILFIVGGAFDGIEQIVKNRMGEKVIGFGTDNAKLKDDETYLSRVVPEDLLKFGLIPEFIGRLPVIATLEQLDEAALVSILTEPKNALVKQYKRMLELDDVELEFEPTALIEIAKEAIERKTGARGLRSIIEQIMLEVMFEIPSRDDITKCIITEKAARGEEEPQLQLEDGSIIPIKTSA</sequence>
<accession>Q8Y7K9</accession>
<keyword id="KW-0002">3D-structure</keyword>
<keyword id="KW-0067">ATP-binding</keyword>
<keyword id="KW-0143">Chaperone</keyword>
<keyword id="KW-0479">Metal-binding</keyword>
<keyword id="KW-0547">Nucleotide-binding</keyword>
<keyword id="KW-1185">Reference proteome</keyword>
<keyword id="KW-0862">Zinc</keyword>
<feature type="chain" id="PRO_0000160380" description="ATP-dependent Clp protease ATP-binding subunit ClpX">
    <location>
        <begin position="1"/>
        <end position="419"/>
    </location>
</feature>
<feature type="domain" description="ClpX-type ZB" evidence="2">
    <location>
        <begin position="1"/>
        <end position="54"/>
    </location>
</feature>
<feature type="binding site" evidence="2">
    <location>
        <position position="13"/>
    </location>
    <ligand>
        <name>Zn(2+)</name>
        <dbReference type="ChEBI" id="CHEBI:29105"/>
    </ligand>
</feature>
<feature type="binding site" evidence="2">
    <location>
        <position position="16"/>
    </location>
    <ligand>
        <name>Zn(2+)</name>
        <dbReference type="ChEBI" id="CHEBI:29105"/>
    </ligand>
</feature>
<feature type="binding site" evidence="2">
    <location>
        <position position="35"/>
    </location>
    <ligand>
        <name>Zn(2+)</name>
        <dbReference type="ChEBI" id="CHEBI:29105"/>
    </ligand>
</feature>
<feature type="binding site" evidence="2">
    <location>
        <position position="38"/>
    </location>
    <ligand>
        <name>Zn(2+)</name>
        <dbReference type="ChEBI" id="CHEBI:29105"/>
    </ligand>
</feature>
<feature type="binding site" evidence="1">
    <location>
        <begin position="118"/>
        <end position="125"/>
    </location>
    <ligand>
        <name>ATP</name>
        <dbReference type="ChEBI" id="CHEBI:30616"/>
    </ligand>
</feature>
<evidence type="ECO:0000255" key="1">
    <source>
        <dbReference type="HAMAP-Rule" id="MF_00175"/>
    </source>
</evidence>
<evidence type="ECO:0000255" key="2">
    <source>
        <dbReference type="PROSITE-ProRule" id="PRU01250"/>
    </source>
</evidence>
<protein>
    <recommendedName>
        <fullName evidence="1">ATP-dependent Clp protease ATP-binding subunit ClpX</fullName>
    </recommendedName>
</protein>
<dbReference type="EMBL" id="AL591978">
    <property type="protein sequence ID" value="CAC99346.1"/>
    <property type="molecule type" value="Genomic_DNA"/>
</dbReference>
<dbReference type="PIR" id="AD1233">
    <property type="entry name" value="AD1233"/>
</dbReference>
<dbReference type="RefSeq" id="NP_464793.1">
    <property type="nucleotide sequence ID" value="NC_003210.1"/>
</dbReference>
<dbReference type="RefSeq" id="WP_003723886.1">
    <property type="nucleotide sequence ID" value="NZ_CP149495.1"/>
</dbReference>
<dbReference type="PDB" id="6SFW">
    <property type="method" value="EM"/>
    <property type="resolution" value="6.00 A"/>
    <property type="chains" value="O/P/Q/R/S/T=1-419"/>
</dbReference>
<dbReference type="PDBsum" id="6SFW"/>
<dbReference type="SMR" id="Q8Y7K9"/>
<dbReference type="STRING" id="169963.gene:17593925"/>
<dbReference type="PaxDb" id="169963-lmo1268"/>
<dbReference type="EnsemblBacteria" id="CAC99346">
    <property type="protein sequence ID" value="CAC99346"/>
    <property type="gene ID" value="CAC99346"/>
</dbReference>
<dbReference type="GeneID" id="985086"/>
<dbReference type="KEGG" id="lmo:lmo1268"/>
<dbReference type="PATRIC" id="fig|169963.11.peg.1303"/>
<dbReference type="eggNOG" id="COG1219">
    <property type="taxonomic scope" value="Bacteria"/>
</dbReference>
<dbReference type="HOGENOM" id="CLU_014218_8_2_9"/>
<dbReference type="OrthoDB" id="9804062at2"/>
<dbReference type="PhylomeDB" id="Q8Y7K9"/>
<dbReference type="BioCyc" id="LMON169963:LMO1268-MONOMER"/>
<dbReference type="Proteomes" id="UP000000817">
    <property type="component" value="Chromosome"/>
</dbReference>
<dbReference type="GO" id="GO:0009376">
    <property type="term" value="C:HslUV protease complex"/>
    <property type="evidence" value="ECO:0000318"/>
    <property type="project" value="GO_Central"/>
</dbReference>
<dbReference type="GO" id="GO:0005524">
    <property type="term" value="F:ATP binding"/>
    <property type="evidence" value="ECO:0000318"/>
    <property type="project" value="GO_Central"/>
</dbReference>
<dbReference type="GO" id="GO:0016887">
    <property type="term" value="F:ATP hydrolysis activity"/>
    <property type="evidence" value="ECO:0000318"/>
    <property type="project" value="GO_Central"/>
</dbReference>
<dbReference type="GO" id="GO:0140662">
    <property type="term" value="F:ATP-dependent protein folding chaperone"/>
    <property type="evidence" value="ECO:0007669"/>
    <property type="project" value="InterPro"/>
</dbReference>
<dbReference type="GO" id="GO:0046983">
    <property type="term" value="F:protein dimerization activity"/>
    <property type="evidence" value="ECO:0007669"/>
    <property type="project" value="InterPro"/>
</dbReference>
<dbReference type="GO" id="GO:0051082">
    <property type="term" value="F:unfolded protein binding"/>
    <property type="evidence" value="ECO:0007669"/>
    <property type="project" value="UniProtKB-UniRule"/>
</dbReference>
<dbReference type="GO" id="GO:0008270">
    <property type="term" value="F:zinc ion binding"/>
    <property type="evidence" value="ECO:0007669"/>
    <property type="project" value="InterPro"/>
</dbReference>
<dbReference type="GO" id="GO:0051301">
    <property type="term" value="P:cell division"/>
    <property type="evidence" value="ECO:0000318"/>
    <property type="project" value="GO_Central"/>
</dbReference>
<dbReference type="GO" id="GO:0051603">
    <property type="term" value="P:proteolysis involved in protein catabolic process"/>
    <property type="evidence" value="ECO:0000318"/>
    <property type="project" value="GO_Central"/>
</dbReference>
<dbReference type="CDD" id="cd19497">
    <property type="entry name" value="RecA-like_ClpX"/>
    <property type="match status" value="1"/>
</dbReference>
<dbReference type="FunFam" id="1.10.8.60:FF:000002">
    <property type="entry name" value="ATP-dependent Clp protease ATP-binding subunit ClpX"/>
    <property type="match status" value="1"/>
</dbReference>
<dbReference type="FunFam" id="3.40.50.300:FF:000005">
    <property type="entry name" value="ATP-dependent Clp protease ATP-binding subunit ClpX"/>
    <property type="match status" value="1"/>
</dbReference>
<dbReference type="Gene3D" id="1.10.8.60">
    <property type="match status" value="1"/>
</dbReference>
<dbReference type="Gene3D" id="6.20.220.10">
    <property type="entry name" value="ClpX chaperone, C4-type zinc finger domain"/>
    <property type="match status" value="1"/>
</dbReference>
<dbReference type="Gene3D" id="3.40.50.300">
    <property type="entry name" value="P-loop containing nucleotide triphosphate hydrolases"/>
    <property type="match status" value="1"/>
</dbReference>
<dbReference type="HAMAP" id="MF_00175">
    <property type="entry name" value="ClpX"/>
    <property type="match status" value="1"/>
</dbReference>
<dbReference type="InterPro" id="IPR003593">
    <property type="entry name" value="AAA+_ATPase"/>
</dbReference>
<dbReference type="InterPro" id="IPR050052">
    <property type="entry name" value="ATP-dep_Clp_protease_ClpX"/>
</dbReference>
<dbReference type="InterPro" id="IPR003959">
    <property type="entry name" value="ATPase_AAA_core"/>
</dbReference>
<dbReference type="InterPro" id="IPR019489">
    <property type="entry name" value="Clp_ATPase_C"/>
</dbReference>
<dbReference type="InterPro" id="IPR004487">
    <property type="entry name" value="Clp_protease_ATP-bd_su_ClpX"/>
</dbReference>
<dbReference type="InterPro" id="IPR046425">
    <property type="entry name" value="ClpX_bact"/>
</dbReference>
<dbReference type="InterPro" id="IPR027417">
    <property type="entry name" value="P-loop_NTPase"/>
</dbReference>
<dbReference type="InterPro" id="IPR010603">
    <property type="entry name" value="Znf_CppX_C4"/>
</dbReference>
<dbReference type="InterPro" id="IPR038366">
    <property type="entry name" value="Znf_CppX_C4_sf"/>
</dbReference>
<dbReference type="NCBIfam" id="TIGR00382">
    <property type="entry name" value="clpX"/>
    <property type="match status" value="1"/>
</dbReference>
<dbReference type="NCBIfam" id="NF003745">
    <property type="entry name" value="PRK05342.1"/>
    <property type="match status" value="1"/>
</dbReference>
<dbReference type="PANTHER" id="PTHR48102:SF7">
    <property type="entry name" value="ATP-DEPENDENT CLP PROTEASE ATP-BINDING SUBUNIT CLPX-LIKE, MITOCHONDRIAL"/>
    <property type="match status" value="1"/>
</dbReference>
<dbReference type="PANTHER" id="PTHR48102">
    <property type="entry name" value="ATP-DEPENDENT CLP PROTEASE ATP-BINDING SUBUNIT CLPX-LIKE, MITOCHONDRIAL-RELATED"/>
    <property type="match status" value="1"/>
</dbReference>
<dbReference type="Pfam" id="PF07724">
    <property type="entry name" value="AAA_2"/>
    <property type="match status" value="1"/>
</dbReference>
<dbReference type="Pfam" id="PF10431">
    <property type="entry name" value="ClpB_D2-small"/>
    <property type="match status" value="1"/>
</dbReference>
<dbReference type="Pfam" id="PF06689">
    <property type="entry name" value="zf-C4_ClpX"/>
    <property type="match status" value="1"/>
</dbReference>
<dbReference type="SMART" id="SM00382">
    <property type="entry name" value="AAA"/>
    <property type="match status" value="1"/>
</dbReference>
<dbReference type="SMART" id="SM01086">
    <property type="entry name" value="ClpB_D2-small"/>
    <property type="match status" value="1"/>
</dbReference>
<dbReference type="SMART" id="SM00994">
    <property type="entry name" value="zf-C4_ClpX"/>
    <property type="match status" value="1"/>
</dbReference>
<dbReference type="SUPFAM" id="SSF57716">
    <property type="entry name" value="Glucocorticoid receptor-like (DNA-binding domain)"/>
    <property type="match status" value="1"/>
</dbReference>
<dbReference type="SUPFAM" id="SSF52540">
    <property type="entry name" value="P-loop containing nucleoside triphosphate hydrolases"/>
    <property type="match status" value="1"/>
</dbReference>
<dbReference type="PROSITE" id="PS51902">
    <property type="entry name" value="CLPX_ZB"/>
    <property type="match status" value="1"/>
</dbReference>
<comment type="function">
    <text evidence="1">ATP-dependent specificity component of the Clp protease. It directs the protease to specific substrates. Can perform chaperone functions in the absence of ClpP.</text>
</comment>
<comment type="subunit">
    <text evidence="1">Component of the ClpX-ClpP complex. Forms a hexameric ring that, in the presence of ATP, binds to fourteen ClpP subunits assembled into a disk-like structure with a central cavity, resembling the structure of eukaryotic proteasomes.</text>
</comment>
<comment type="similarity">
    <text evidence="1">Belongs to the ClpX chaperone family.</text>
</comment>
<gene>
    <name evidence="1" type="primary">clpX</name>
    <name type="ordered locus">lmo1268</name>
</gene>
<reference key="1">
    <citation type="journal article" date="2001" name="Science">
        <title>Comparative genomics of Listeria species.</title>
        <authorList>
            <person name="Glaser P."/>
            <person name="Frangeul L."/>
            <person name="Buchrieser C."/>
            <person name="Rusniok C."/>
            <person name="Amend A."/>
            <person name="Baquero F."/>
            <person name="Berche P."/>
            <person name="Bloecker H."/>
            <person name="Brandt P."/>
            <person name="Chakraborty T."/>
            <person name="Charbit A."/>
            <person name="Chetouani F."/>
            <person name="Couve E."/>
            <person name="de Daruvar A."/>
            <person name="Dehoux P."/>
            <person name="Domann E."/>
            <person name="Dominguez-Bernal G."/>
            <person name="Duchaud E."/>
            <person name="Durant L."/>
            <person name="Dussurget O."/>
            <person name="Entian K.-D."/>
            <person name="Fsihi H."/>
            <person name="Garcia-del Portillo F."/>
            <person name="Garrido P."/>
            <person name="Gautier L."/>
            <person name="Goebel W."/>
            <person name="Gomez-Lopez N."/>
            <person name="Hain T."/>
            <person name="Hauf J."/>
            <person name="Jackson D."/>
            <person name="Jones L.-M."/>
            <person name="Kaerst U."/>
            <person name="Kreft J."/>
            <person name="Kuhn M."/>
            <person name="Kunst F."/>
            <person name="Kurapkat G."/>
            <person name="Madueno E."/>
            <person name="Maitournam A."/>
            <person name="Mata Vicente J."/>
            <person name="Ng E."/>
            <person name="Nedjari H."/>
            <person name="Nordsiek G."/>
            <person name="Novella S."/>
            <person name="de Pablos B."/>
            <person name="Perez-Diaz J.-C."/>
            <person name="Purcell R."/>
            <person name="Remmel B."/>
            <person name="Rose M."/>
            <person name="Schlueter T."/>
            <person name="Simoes N."/>
            <person name="Tierrez A."/>
            <person name="Vazquez-Boland J.-A."/>
            <person name="Voss H."/>
            <person name="Wehland J."/>
            <person name="Cossart P."/>
        </authorList>
    </citation>
    <scope>NUCLEOTIDE SEQUENCE [LARGE SCALE GENOMIC DNA]</scope>
    <source>
        <strain>ATCC BAA-679 / EGD-e</strain>
    </source>
</reference>
<proteinExistence type="evidence at protein level"/>
<name>CLPX_LISMO</name>
<organism>
    <name type="scientific">Listeria monocytogenes serovar 1/2a (strain ATCC BAA-679 / EGD-e)</name>
    <dbReference type="NCBI Taxonomy" id="169963"/>
    <lineage>
        <taxon>Bacteria</taxon>
        <taxon>Bacillati</taxon>
        <taxon>Bacillota</taxon>
        <taxon>Bacilli</taxon>
        <taxon>Bacillales</taxon>
        <taxon>Listeriaceae</taxon>
        <taxon>Listeria</taxon>
    </lineage>
</organism>